<evidence type="ECO:0000255" key="1">
    <source>
        <dbReference type="HAMAP-Rule" id="MF_04067"/>
    </source>
</evidence>
<proteinExistence type="inferred from homology"/>
<feature type="chain" id="PRO_0000372956" description="Nuclear export protein">
    <location>
        <begin position="1"/>
        <end position="121"/>
    </location>
</feature>
<feature type="short sequence motif" description="Nuclear export signal" evidence="1">
    <location>
        <begin position="12"/>
        <end position="21"/>
    </location>
</feature>
<feature type="short sequence motif" description="Nuclear export signal" evidence="1">
    <location>
        <begin position="85"/>
        <end position="94"/>
    </location>
</feature>
<organism>
    <name type="scientific">Influenza A virus (strain A/Swine/Wisconsin/1/1967 H1N1)</name>
    <dbReference type="NCBI Taxonomy" id="382855"/>
    <lineage>
        <taxon>Viruses</taxon>
        <taxon>Riboviria</taxon>
        <taxon>Orthornavirae</taxon>
        <taxon>Negarnaviricota</taxon>
        <taxon>Polyploviricotina</taxon>
        <taxon>Insthoviricetes</taxon>
        <taxon>Articulavirales</taxon>
        <taxon>Orthomyxoviridae</taxon>
        <taxon>Alphainfluenzavirus</taxon>
        <taxon>Alphainfluenzavirus influenzae</taxon>
        <taxon>Influenza A virus</taxon>
    </lineage>
</organism>
<organismHost>
    <name type="scientific">Aves</name>
    <dbReference type="NCBI Taxonomy" id="8782"/>
</organismHost>
<organismHost>
    <name type="scientific">Homo sapiens</name>
    <name type="common">Human</name>
    <dbReference type="NCBI Taxonomy" id="9606"/>
</organismHost>
<organismHost>
    <name type="scientific">Sus scrofa</name>
    <name type="common">Pig</name>
    <dbReference type="NCBI Taxonomy" id="9823"/>
</organismHost>
<keyword id="KW-0025">Alternative splicing</keyword>
<keyword id="KW-1048">Host nucleus</keyword>
<keyword id="KW-0945">Host-virus interaction</keyword>
<keyword id="KW-0813">Transport</keyword>
<keyword id="KW-0946">Virion</keyword>
<comment type="function">
    <text evidence="1">Mediates the nuclear export of encapsidated genomic RNAs (ribonucleoproteins, RNPs). Acts as an adapter between viral RNPs complexes and the nuclear export machinery of the cell. Possesses no intrinsic RNA-binding activity, but includes a C-terminal M1-binding domain. This domain is believed to allow recognition of RNPs bound to the protein M1. Since protein M1 is not available in large quantities before late stages of infection, such an indirect recognition mechanism probably ensures that genomic RNPs are not exported from the host nucleus until sufficient quantities of viral mRNA and progeny genomic RNA have been synthesized. Furthermore, the RNPs enter the host cytoplasm only when associated with the M1 protein that is necessary to guide them to the plasma membrane. May down-regulate viral RNA synthesis when overproduced.</text>
</comment>
<comment type="subunit">
    <text evidence="1">Interacts with protein M1. May interact with host nucleoporin RAB/HRB and exportin XPO1/CRM1.</text>
</comment>
<comment type="subcellular location">
    <subcellularLocation>
        <location evidence="1">Virion</location>
    </subcellularLocation>
    <subcellularLocation>
        <location evidence="1">Host nucleus</location>
    </subcellularLocation>
</comment>
<comment type="alternative products">
    <event type="alternative splicing"/>
    <isoform>
        <id>A8C8W8-1</id>
        <name>NEP</name>
        <name>NS2</name>
        <sequence type="displayed"/>
    </isoform>
    <isoform>
        <id>A8C8W9-1</id>
        <name>NS1</name>
        <sequence type="external"/>
    </isoform>
</comment>
<comment type="miscellaneous">
    <text>Average number present in a viral particle is estimated to be 130-200 molecules.</text>
</comment>
<comment type="similarity">
    <text evidence="1">Belongs to the influenza viruses NEP family.</text>
</comment>
<gene>
    <name evidence="1" type="primary">NS</name>
</gene>
<name>NEP_I67A2</name>
<accession>A8C8W8</accession>
<dbReference type="EMBL" id="CY026295">
    <property type="protein sequence ID" value="ABV82590.1"/>
    <property type="molecule type" value="Viral_cRNA"/>
</dbReference>
<dbReference type="SMR" id="A8C8W8"/>
<dbReference type="Proteomes" id="UP000116872">
    <property type="component" value="Genome"/>
</dbReference>
<dbReference type="GO" id="GO:0042025">
    <property type="term" value="C:host cell nucleus"/>
    <property type="evidence" value="ECO:0007669"/>
    <property type="project" value="UniProtKB-SubCell"/>
</dbReference>
<dbReference type="GO" id="GO:0044423">
    <property type="term" value="C:virion component"/>
    <property type="evidence" value="ECO:0007669"/>
    <property type="project" value="UniProtKB-UniRule"/>
</dbReference>
<dbReference type="GO" id="GO:0039675">
    <property type="term" value="P:exit of virus from host cell nucleus through nuclear pore"/>
    <property type="evidence" value="ECO:0007669"/>
    <property type="project" value="UniProtKB-UniRule"/>
</dbReference>
<dbReference type="FunFam" id="1.10.287.230:FF:000001">
    <property type="entry name" value="Nuclear export protein"/>
    <property type="match status" value="1"/>
</dbReference>
<dbReference type="Gene3D" id="1.10.287.230">
    <property type="match status" value="1"/>
</dbReference>
<dbReference type="HAMAP" id="MF_04067">
    <property type="entry name" value="INFV_NEP"/>
    <property type="match status" value="1"/>
</dbReference>
<dbReference type="InterPro" id="IPR000968">
    <property type="entry name" value="Flu_NS2"/>
</dbReference>
<dbReference type="Pfam" id="PF00601">
    <property type="entry name" value="Flu_NS2"/>
    <property type="match status" value="1"/>
</dbReference>
<dbReference type="SUPFAM" id="SSF101156">
    <property type="entry name" value="Nonstructural protein ns2, Nep, M1-binding domain"/>
    <property type="match status" value="1"/>
</dbReference>
<sequence length="121" mass="14501">MDSNTVSSFQDILMRMSKMQLRSSSEGLNGMVTQFESLKIYRDSLGEAVMRMGDLHYLQNRNEKWREQLGQKFEEIRWLIEEVRHKLKITENSFEQITFMQALQLLLEVEQEMRTFSFQLI</sequence>
<protein>
    <recommendedName>
        <fullName evidence="1">Nuclear export protein</fullName>
        <shortName evidence="1">NEP</shortName>
    </recommendedName>
    <alternativeName>
        <fullName evidence="1">Non-structural protein 2</fullName>
        <shortName evidence="1">NS2</shortName>
    </alternativeName>
</protein>
<reference key="1">
    <citation type="submission" date="2007-10" db="EMBL/GenBank/DDBJ databases">
        <title>The NIAID influenza genome sequencing project.</title>
        <authorList>
            <person name="Ghedin E."/>
            <person name="Spiro D."/>
            <person name="Miller N."/>
            <person name="Zaborsky J."/>
            <person name="Feldblyum T."/>
            <person name="Subbu V."/>
            <person name="Shumway M."/>
            <person name="Sparenborg J."/>
            <person name="Groveman L."/>
            <person name="Halpin R."/>
            <person name="Sitz J."/>
            <person name="Koo H."/>
            <person name="Salzberg S.L."/>
            <person name="Webster R.G."/>
            <person name="Hoffmann E."/>
            <person name="Krauss S."/>
            <person name="Naeve C."/>
            <person name="Bao Y."/>
            <person name="Bolotov P."/>
            <person name="Dernovoy D."/>
            <person name="Kiryutin B."/>
            <person name="Lipman D.J."/>
            <person name="Tatusova T."/>
        </authorList>
    </citation>
    <scope>NUCLEOTIDE SEQUENCE [GENOMIC RNA]</scope>
</reference>
<reference key="2">
    <citation type="submission" date="2007-10" db="EMBL/GenBank/DDBJ databases">
        <authorList>
            <consortium name="The NIAID Influenza Genome Sequencing Consortium"/>
        </authorList>
    </citation>
    <scope>NUCLEOTIDE SEQUENCE [GENOMIC RNA]</scope>
</reference>